<sequence length="385" mass="43197">MAAVESRVCETEGCSSEAKLQCPTCIKLGIQGSYFCSQECFKGSWASHKLLHKKAKDDKIKPETSPWTMDGDINTDPWPGYRYTGKLRPHYPLTPMRPVPSYIQRPDYADHPLGMSESEQALKGTSQIKILSTEDIEGMRVVCRLAREVLGVAAMMVKSGITTEEIDHAVHLACISRNCYPSPLNYYNFPKSCCTSVNEVICHGIPDRRPLQDGDIVNVDITVYRDGYHGDLNETFYVGDVDEGAKRLVETTYECLMQAIDEVKPGVRYRELGNIIQKHAQANGFSVVRSYCGHGIHKLFHTAPNVPHYAKNKAVGVMKPGHVFTIEPMICEGGWQDETWPDGWTAITRDGKRSAQFEHTLLVTETGCEILTRRLEENGRPHFIS</sequence>
<organism>
    <name type="scientific">Xenopus tropicalis</name>
    <name type="common">Western clawed frog</name>
    <name type="synonym">Silurana tropicalis</name>
    <dbReference type="NCBI Taxonomy" id="8364"/>
    <lineage>
        <taxon>Eukaryota</taxon>
        <taxon>Metazoa</taxon>
        <taxon>Chordata</taxon>
        <taxon>Craniata</taxon>
        <taxon>Vertebrata</taxon>
        <taxon>Euteleostomi</taxon>
        <taxon>Amphibia</taxon>
        <taxon>Batrachia</taxon>
        <taxon>Anura</taxon>
        <taxon>Pipoidea</taxon>
        <taxon>Pipidae</taxon>
        <taxon>Xenopodinae</taxon>
        <taxon>Xenopus</taxon>
        <taxon>Silurana</taxon>
    </lineage>
</organism>
<feature type="chain" id="PRO_0000323739" description="Methionine aminopeptidase 1">
    <location>
        <begin position="1"/>
        <end position="385"/>
    </location>
</feature>
<feature type="zinc finger region" description="C6H2-type" evidence="2">
    <location>
        <begin position="6"/>
        <end position="59"/>
    </location>
</feature>
<feature type="binding site" evidence="1">
    <location>
        <position position="9"/>
    </location>
    <ligand>
        <name>Zn(2+)</name>
        <dbReference type="ChEBI" id="CHEBI:29105"/>
        <label>1</label>
    </ligand>
</feature>
<feature type="binding site" evidence="1">
    <location>
        <position position="14"/>
    </location>
    <ligand>
        <name>Zn(2+)</name>
        <dbReference type="ChEBI" id="CHEBI:29105"/>
        <label>1</label>
    </ligand>
</feature>
<feature type="binding site" evidence="1">
    <location>
        <position position="22"/>
    </location>
    <ligand>
        <name>Zn(2+)</name>
        <dbReference type="ChEBI" id="CHEBI:29105"/>
        <label>2</label>
    </ligand>
</feature>
<feature type="binding site" evidence="1">
    <location>
        <position position="25"/>
    </location>
    <ligand>
        <name>Zn(2+)</name>
        <dbReference type="ChEBI" id="CHEBI:29105"/>
        <label>2</label>
    </ligand>
</feature>
<feature type="binding site" evidence="1">
    <location>
        <position position="36"/>
    </location>
    <ligand>
        <name>Zn(2+)</name>
        <dbReference type="ChEBI" id="CHEBI:29105"/>
        <label>1</label>
    </ligand>
</feature>
<feature type="binding site" evidence="1">
    <location>
        <position position="40"/>
    </location>
    <ligand>
        <name>Zn(2+)</name>
        <dbReference type="ChEBI" id="CHEBI:29105"/>
        <label>1</label>
    </ligand>
</feature>
<feature type="binding site" evidence="1">
    <location>
        <position position="48"/>
    </location>
    <ligand>
        <name>Zn(2+)</name>
        <dbReference type="ChEBI" id="CHEBI:29105"/>
        <label>2</label>
    </ligand>
</feature>
<feature type="binding site" evidence="1">
    <location>
        <position position="52"/>
    </location>
    <ligand>
        <name>Zn(2+)</name>
        <dbReference type="ChEBI" id="CHEBI:29105"/>
        <label>2</label>
    </ligand>
</feature>
<feature type="binding site" evidence="1">
    <location>
        <position position="203"/>
    </location>
    <ligand>
        <name>a protein</name>
        <dbReference type="ChEBI" id="CHEBI:16541"/>
    </ligand>
    <ligandPart>
        <name>N-terminal L-methionine residue</name>
        <dbReference type="ChEBI" id="CHEBI:64731"/>
    </ligandPart>
</feature>
<feature type="binding site" evidence="1">
    <location>
        <position position="220"/>
    </location>
    <ligand>
        <name>Zn(2+)</name>
        <dbReference type="ChEBI" id="CHEBI:29105"/>
        <label>3</label>
    </ligand>
</feature>
<feature type="binding site" evidence="1">
    <location>
        <position position="231"/>
    </location>
    <ligand>
        <name>Zn(2+)</name>
        <dbReference type="ChEBI" id="CHEBI:29105"/>
        <label>3</label>
    </ligand>
</feature>
<feature type="binding site" evidence="1">
    <location>
        <position position="231"/>
    </location>
    <ligand>
        <name>Zn(2+)</name>
        <dbReference type="ChEBI" id="CHEBI:29105"/>
        <label>4</label>
        <note>catalytic</note>
    </ligand>
</feature>
<feature type="binding site" evidence="1">
    <location>
        <position position="294"/>
    </location>
    <ligand>
        <name>Zn(2+)</name>
        <dbReference type="ChEBI" id="CHEBI:29105"/>
        <label>4</label>
        <note>catalytic</note>
    </ligand>
</feature>
<feature type="binding site" evidence="1">
    <location>
        <position position="301"/>
    </location>
    <ligand>
        <name>a protein</name>
        <dbReference type="ChEBI" id="CHEBI:16541"/>
    </ligand>
    <ligandPart>
        <name>N-terminal L-methionine residue</name>
        <dbReference type="ChEBI" id="CHEBI:64731"/>
    </ligandPart>
</feature>
<feature type="binding site" evidence="1">
    <location>
        <position position="327"/>
    </location>
    <ligand>
        <name>Zn(2+)</name>
        <dbReference type="ChEBI" id="CHEBI:29105"/>
        <label>4</label>
        <note>catalytic</note>
    </ligand>
</feature>
<feature type="binding site" evidence="1">
    <location>
        <position position="358"/>
    </location>
    <ligand>
        <name>Zn(2+)</name>
        <dbReference type="ChEBI" id="CHEBI:29105"/>
        <label>3</label>
    </ligand>
</feature>
<feature type="binding site" evidence="1">
    <location>
        <position position="358"/>
    </location>
    <ligand>
        <name>Zn(2+)</name>
        <dbReference type="ChEBI" id="CHEBI:29105"/>
        <label>4</label>
        <note>catalytic</note>
    </ligand>
</feature>
<keyword id="KW-0031">Aminopeptidase</keyword>
<keyword id="KW-0963">Cytoplasm</keyword>
<keyword id="KW-0378">Hydrolase</keyword>
<keyword id="KW-0479">Metal-binding</keyword>
<keyword id="KW-0645">Protease</keyword>
<keyword id="KW-1185">Reference proteome</keyword>
<keyword id="KW-0862">Zinc</keyword>
<keyword id="KW-0863">Zinc-finger</keyword>
<accession>Q5I0A0</accession>
<dbReference type="EC" id="3.4.11.18" evidence="1"/>
<dbReference type="EMBL" id="BC088554">
    <property type="protein sequence ID" value="AAH88554.1"/>
    <property type="molecule type" value="mRNA"/>
</dbReference>
<dbReference type="RefSeq" id="NP_001011454.1">
    <property type="nucleotide sequence ID" value="NM_001011454.1"/>
</dbReference>
<dbReference type="SMR" id="Q5I0A0"/>
<dbReference type="FunCoup" id="Q5I0A0">
    <property type="interactions" value="2598"/>
</dbReference>
<dbReference type="STRING" id="8364.ENSXETP00000016008"/>
<dbReference type="MEROPS" id="M24.017"/>
<dbReference type="PaxDb" id="8364-ENSXETP00000060500"/>
<dbReference type="DNASU" id="496944"/>
<dbReference type="GeneID" id="496944"/>
<dbReference type="KEGG" id="xtr:496944"/>
<dbReference type="AGR" id="Xenbase:XB-GENE-985733"/>
<dbReference type="CTD" id="23173"/>
<dbReference type="Xenbase" id="XB-GENE-985733">
    <property type="gene designation" value="metap1"/>
</dbReference>
<dbReference type="eggNOG" id="KOG2738">
    <property type="taxonomic scope" value="Eukaryota"/>
</dbReference>
<dbReference type="InParanoid" id="Q5I0A0"/>
<dbReference type="OMA" id="FYGDHAY"/>
<dbReference type="OrthoDB" id="3209743at2759"/>
<dbReference type="Reactome" id="R-XTR-2514859">
    <property type="pathway name" value="Inactivation, recovery and regulation of the phototransduction cascade"/>
</dbReference>
<dbReference type="Proteomes" id="UP000008143">
    <property type="component" value="Chromosome 1"/>
</dbReference>
<dbReference type="Bgee" id="ENSXETG00000009315">
    <property type="expression patterns" value="Expressed in skeletal muscle tissue and 13 other cell types or tissues"/>
</dbReference>
<dbReference type="ExpressionAtlas" id="Q5I0A0">
    <property type="expression patterns" value="differential"/>
</dbReference>
<dbReference type="GO" id="GO:0022626">
    <property type="term" value="C:cytosolic ribosome"/>
    <property type="evidence" value="ECO:0007669"/>
    <property type="project" value="UniProtKB-UniRule"/>
</dbReference>
<dbReference type="GO" id="GO:0004239">
    <property type="term" value="F:initiator methionyl aminopeptidase activity"/>
    <property type="evidence" value="ECO:0007669"/>
    <property type="project" value="UniProtKB-UniRule"/>
</dbReference>
<dbReference type="GO" id="GO:0070006">
    <property type="term" value="F:metalloaminopeptidase activity"/>
    <property type="evidence" value="ECO:0007669"/>
    <property type="project" value="UniProtKB-UniRule"/>
</dbReference>
<dbReference type="GO" id="GO:0008270">
    <property type="term" value="F:zinc ion binding"/>
    <property type="evidence" value="ECO:0007669"/>
    <property type="project" value="UniProtKB-KW"/>
</dbReference>
<dbReference type="GO" id="GO:0006508">
    <property type="term" value="P:proteolysis"/>
    <property type="evidence" value="ECO:0007669"/>
    <property type="project" value="UniProtKB-KW"/>
</dbReference>
<dbReference type="CDD" id="cd01086">
    <property type="entry name" value="MetAP1"/>
    <property type="match status" value="1"/>
</dbReference>
<dbReference type="FunFam" id="3.90.230.10:FF:000010">
    <property type="entry name" value="Methionine aminopeptidase"/>
    <property type="match status" value="1"/>
</dbReference>
<dbReference type="Gene3D" id="3.90.230.10">
    <property type="entry name" value="Creatinase/methionine aminopeptidase superfamily"/>
    <property type="match status" value="1"/>
</dbReference>
<dbReference type="HAMAP" id="MF_01974">
    <property type="entry name" value="MetAP_1"/>
    <property type="match status" value="1"/>
</dbReference>
<dbReference type="InterPro" id="IPR036005">
    <property type="entry name" value="Creatinase/aminopeptidase-like"/>
</dbReference>
<dbReference type="InterPro" id="IPR000994">
    <property type="entry name" value="Pept_M24"/>
</dbReference>
<dbReference type="InterPro" id="IPR001714">
    <property type="entry name" value="Pept_M24_MAP"/>
</dbReference>
<dbReference type="InterPro" id="IPR002467">
    <property type="entry name" value="Pept_M24A_MAP1"/>
</dbReference>
<dbReference type="InterPro" id="IPR031615">
    <property type="entry name" value="Zfn-C6H2"/>
</dbReference>
<dbReference type="NCBIfam" id="TIGR00500">
    <property type="entry name" value="met_pdase_I"/>
    <property type="match status" value="1"/>
</dbReference>
<dbReference type="PANTHER" id="PTHR43330">
    <property type="entry name" value="METHIONINE AMINOPEPTIDASE"/>
    <property type="match status" value="1"/>
</dbReference>
<dbReference type="PANTHER" id="PTHR43330:SF7">
    <property type="entry name" value="METHIONINE AMINOPEPTIDASE 1"/>
    <property type="match status" value="1"/>
</dbReference>
<dbReference type="Pfam" id="PF00557">
    <property type="entry name" value="Peptidase_M24"/>
    <property type="match status" value="1"/>
</dbReference>
<dbReference type="Pfam" id="PF15801">
    <property type="entry name" value="zf-C6H2"/>
    <property type="match status" value="1"/>
</dbReference>
<dbReference type="PRINTS" id="PR00599">
    <property type="entry name" value="MAPEPTIDASE"/>
</dbReference>
<dbReference type="SUPFAM" id="SSF55920">
    <property type="entry name" value="Creatinase/aminopeptidase"/>
    <property type="match status" value="1"/>
</dbReference>
<dbReference type="PROSITE" id="PS00680">
    <property type="entry name" value="MAP_1"/>
    <property type="match status" value="1"/>
</dbReference>
<dbReference type="PROSITE" id="PS52013">
    <property type="entry name" value="ZF_C6H2"/>
    <property type="match status" value="1"/>
</dbReference>
<gene>
    <name type="primary">metap1</name>
</gene>
<reference key="1">
    <citation type="submission" date="2004-12" db="EMBL/GenBank/DDBJ databases">
        <authorList>
            <consortium name="NIH - Xenopus Gene Collection (XGC) project"/>
        </authorList>
    </citation>
    <scope>NUCLEOTIDE SEQUENCE [LARGE SCALE MRNA]</scope>
    <source>
        <tissue>Embryo</tissue>
    </source>
</reference>
<name>MAP1_XENTR</name>
<protein>
    <recommendedName>
        <fullName evidence="1">Methionine aminopeptidase 1</fullName>
        <shortName evidence="1">MAP 1</shortName>
        <shortName evidence="1">MetAP 1</shortName>
        <ecNumber evidence="1">3.4.11.18</ecNumber>
    </recommendedName>
    <alternativeName>
        <fullName evidence="1">Peptidase M 1</fullName>
    </alternativeName>
</protein>
<proteinExistence type="evidence at transcript level"/>
<comment type="function">
    <text evidence="1">Cotranslationally removes the N-terminal methionine from nascent proteins. The N-terminal methionine is often cleaved when the second residue in the primary sequence is small and uncharged (Met-Ala-, Cys, Gly, Pro, Ser, Thr, or Val).</text>
</comment>
<comment type="catalytic activity">
    <reaction evidence="1">
        <text>Release of N-terminal amino acids, preferentially methionine, from peptides and arylamides.</text>
        <dbReference type="EC" id="3.4.11.18"/>
    </reaction>
</comment>
<comment type="cofactor">
    <cofactor evidence="1">
        <name>Zn(2+)</name>
        <dbReference type="ChEBI" id="CHEBI:29105"/>
    </cofactor>
    <cofactor evidence="1">
        <name>Co(2+)</name>
        <dbReference type="ChEBI" id="CHEBI:48828"/>
    </cofactor>
    <cofactor evidence="1">
        <name>Mn(2+)</name>
        <dbReference type="ChEBI" id="CHEBI:29035"/>
    </cofactor>
    <cofactor evidence="1">
        <name>Fe(2+)</name>
        <dbReference type="ChEBI" id="CHEBI:29033"/>
    </cofactor>
    <text evidence="1">Binds 2 divalent metal cations per subunit. Has a high-affinity and a low affinity metal-binding site. The true nature of the physiological cofactor is under debate. The enzyme is active with zinc, cobalt, manganese or divalent iron ions. Has high activity with zinc; zinc cofactor is transferred into the active site region by the ZNG1 zinc chaperone.</text>
</comment>
<comment type="subunit">
    <text evidence="1">Associates with the 60S ribosomal subunit of the 80S translational complex.</text>
</comment>
<comment type="subcellular location">
    <subcellularLocation>
        <location evidence="1">Cytoplasm</location>
    </subcellularLocation>
</comment>
<comment type="similarity">
    <text evidence="1">Belongs to the peptidase M24A family. Methionine aminopeptidase type 1 subfamily.</text>
</comment>
<evidence type="ECO:0000255" key="1">
    <source>
        <dbReference type="HAMAP-Rule" id="MF_03174"/>
    </source>
</evidence>
<evidence type="ECO:0000255" key="2">
    <source>
        <dbReference type="PROSITE-ProRule" id="PRU01357"/>
    </source>
</evidence>